<keyword id="KW-0997">Cell inner membrane</keyword>
<keyword id="KW-1003">Cell membrane</keyword>
<keyword id="KW-0472">Membrane</keyword>
<keyword id="KW-0520">NAD</keyword>
<keyword id="KW-0874">Quinone</keyword>
<keyword id="KW-1185">Reference proteome</keyword>
<keyword id="KW-1278">Translocase</keyword>
<keyword id="KW-0812">Transmembrane</keyword>
<keyword id="KW-1133">Transmembrane helix</keyword>
<keyword id="KW-0813">Transport</keyword>
<keyword id="KW-0830">Ubiquinone</keyword>
<protein>
    <recommendedName>
        <fullName evidence="1">NADH-quinone oxidoreductase subunit K</fullName>
        <ecNumber evidence="1">7.1.1.-</ecNumber>
    </recommendedName>
    <alternativeName>
        <fullName evidence="1">NADH dehydrogenase I subunit K</fullName>
    </alternativeName>
    <alternativeName>
        <fullName evidence="1">NDH-1 subunit K</fullName>
    </alternativeName>
</protein>
<evidence type="ECO:0000255" key="1">
    <source>
        <dbReference type="HAMAP-Rule" id="MF_01456"/>
    </source>
</evidence>
<name>NUOK_COXBU</name>
<organism>
    <name type="scientific">Coxiella burnetii (strain RSA 493 / Nine Mile phase I)</name>
    <dbReference type="NCBI Taxonomy" id="227377"/>
    <lineage>
        <taxon>Bacteria</taxon>
        <taxon>Pseudomonadati</taxon>
        <taxon>Pseudomonadota</taxon>
        <taxon>Gammaproteobacteria</taxon>
        <taxon>Legionellales</taxon>
        <taxon>Coxiellaceae</taxon>
        <taxon>Coxiella</taxon>
    </lineage>
</organism>
<comment type="function">
    <text evidence="1">NDH-1 shuttles electrons from NADH, via FMN and iron-sulfur (Fe-S) centers, to quinones in the respiratory chain. The immediate electron acceptor for the enzyme in this species is believed to be ubiquinone. Couples the redox reaction to proton translocation (for every two electrons transferred, four hydrogen ions are translocated across the cytoplasmic membrane), and thus conserves the redox energy in a proton gradient.</text>
</comment>
<comment type="catalytic activity">
    <reaction evidence="1">
        <text>a quinone + NADH + 5 H(+)(in) = a quinol + NAD(+) + 4 H(+)(out)</text>
        <dbReference type="Rhea" id="RHEA:57888"/>
        <dbReference type="ChEBI" id="CHEBI:15378"/>
        <dbReference type="ChEBI" id="CHEBI:24646"/>
        <dbReference type="ChEBI" id="CHEBI:57540"/>
        <dbReference type="ChEBI" id="CHEBI:57945"/>
        <dbReference type="ChEBI" id="CHEBI:132124"/>
    </reaction>
</comment>
<comment type="subunit">
    <text evidence="1">NDH-1 is composed of 14 different subunits. Subunits NuoA, H, J, K, L, M, N constitute the membrane sector of the complex.</text>
</comment>
<comment type="subcellular location">
    <subcellularLocation>
        <location evidence="1">Cell inner membrane</location>
        <topology evidence="1">Multi-pass membrane protein</topology>
    </subcellularLocation>
</comment>
<comment type="similarity">
    <text evidence="1">Belongs to the complex I subunit 4L family.</text>
</comment>
<proteinExistence type="inferred from homology"/>
<gene>
    <name evidence="1" type="primary">nuoK</name>
    <name type="ordered locus">CBU_1438</name>
</gene>
<sequence length="101" mass="11056">MIPLGYFLIIGAILFGLGFAGIIINRKNLIVLLMCIELMLLAVNTNFIAFSQYLGARAGEIFVFFILTVAAAESAIGLAILVLFYRRRGSINVDDMNILKG</sequence>
<reference key="1">
    <citation type="journal article" date="2003" name="Proc. Natl. Acad. Sci. U.S.A.">
        <title>Complete genome sequence of the Q-fever pathogen, Coxiella burnetii.</title>
        <authorList>
            <person name="Seshadri R."/>
            <person name="Paulsen I.T."/>
            <person name="Eisen J.A."/>
            <person name="Read T.D."/>
            <person name="Nelson K.E."/>
            <person name="Nelson W.C."/>
            <person name="Ward N.L."/>
            <person name="Tettelin H."/>
            <person name="Davidsen T.M."/>
            <person name="Beanan M.J."/>
            <person name="DeBoy R.T."/>
            <person name="Daugherty S.C."/>
            <person name="Brinkac L.M."/>
            <person name="Madupu R."/>
            <person name="Dodson R.J."/>
            <person name="Khouri H.M."/>
            <person name="Lee K.H."/>
            <person name="Carty H.A."/>
            <person name="Scanlan D."/>
            <person name="Heinzen R.A."/>
            <person name="Thompson H.A."/>
            <person name="Samuel J.E."/>
            <person name="Fraser C.M."/>
            <person name="Heidelberg J.F."/>
        </authorList>
    </citation>
    <scope>NUCLEOTIDE SEQUENCE [LARGE SCALE GENOMIC DNA]</scope>
    <source>
        <strain>RSA 493 / Nine Mile phase I</strain>
    </source>
</reference>
<dbReference type="EC" id="7.1.1.-" evidence="1"/>
<dbReference type="EMBL" id="AE016828">
    <property type="protein sequence ID" value="AAO90935.1"/>
    <property type="molecule type" value="Genomic_DNA"/>
</dbReference>
<dbReference type="RefSeq" id="NP_820421.1">
    <property type="nucleotide sequence ID" value="NC_002971.4"/>
</dbReference>
<dbReference type="RefSeq" id="WP_005769056.1">
    <property type="nucleotide sequence ID" value="NZ_CDBG01000001.1"/>
</dbReference>
<dbReference type="SMR" id="Q83BR5"/>
<dbReference type="STRING" id="227377.CBU_1438"/>
<dbReference type="EnsemblBacteria" id="AAO90935">
    <property type="protein sequence ID" value="AAO90935"/>
    <property type="gene ID" value="CBU_1438"/>
</dbReference>
<dbReference type="GeneID" id="1209345"/>
<dbReference type="KEGG" id="cbu:CBU_1438"/>
<dbReference type="PATRIC" id="fig|227377.7.peg.1437"/>
<dbReference type="eggNOG" id="COG0713">
    <property type="taxonomic scope" value="Bacteria"/>
</dbReference>
<dbReference type="HOGENOM" id="CLU_144724_2_0_6"/>
<dbReference type="OrthoDB" id="9801357at2"/>
<dbReference type="Proteomes" id="UP000002671">
    <property type="component" value="Chromosome"/>
</dbReference>
<dbReference type="GO" id="GO:0030964">
    <property type="term" value="C:NADH dehydrogenase complex"/>
    <property type="evidence" value="ECO:0000318"/>
    <property type="project" value="GO_Central"/>
</dbReference>
<dbReference type="GO" id="GO:0005886">
    <property type="term" value="C:plasma membrane"/>
    <property type="evidence" value="ECO:0007669"/>
    <property type="project" value="UniProtKB-SubCell"/>
</dbReference>
<dbReference type="GO" id="GO:0050136">
    <property type="term" value="F:NADH:ubiquinone reductase (non-electrogenic) activity"/>
    <property type="evidence" value="ECO:0007669"/>
    <property type="project" value="UniProtKB-UniRule"/>
</dbReference>
<dbReference type="GO" id="GO:0048038">
    <property type="term" value="F:quinone binding"/>
    <property type="evidence" value="ECO:0007669"/>
    <property type="project" value="UniProtKB-KW"/>
</dbReference>
<dbReference type="GO" id="GO:0042773">
    <property type="term" value="P:ATP synthesis coupled electron transport"/>
    <property type="evidence" value="ECO:0007669"/>
    <property type="project" value="InterPro"/>
</dbReference>
<dbReference type="FunFam" id="1.10.287.3510:FF:000001">
    <property type="entry name" value="NADH-quinone oxidoreductase subunit K"/>
    <property type="match status" value="1"/>
</dbReference>
<dbReference type="Gene3D" id="1.10.287.3510">
    <property type="match status" value="1"/>
</dbReference>
<dbReference type="HAMAP" id="MF_01456">
    <property type="entry name" value="NDH1_NuoK"/>
    <property type="match status" value="1"/>
</dbReference>
<dbReference type="InterPro" id="IPR001133">
    <property type="entry name" value="NADH_UbQ_OxRdtase_chain4L/K"/>
</dbReference>
<dbReference type="InterPro" id="IPR039428">
    <property type="entry name" value="NUOK/Mnh_C1-like"/>
</dbReference>
<dbReference type="NCBIfam" id="NF004320">
    <property type="entry name" value="PRK05715.1-2"/>
    <property type="match status" value="1"/>
</dbReference>
<dbReference type="NCBIfam" id="NF004321">
    <property type="entry name" value="PRK05715.1-3"/>
    <property type="match status" value="1"/>
</dbReference>
<dbReference type="NCBIfam" id="NF004323">
    <property type="entry name" value="PRK05715.1-5"/>
    <property type="match status" value="1"/>
</dbReference>
<dbReference type="PANTHER" id="PTHR11434:SF21">
    <property type="entry name" value="NADH DEHYDROGENASE SUBUNIT 4L-RELATED"/>
    <property type="match status" value="1"/>
</dbReference>
<dbReference type="PANTHER" id="PTHR11434">
    <property type="entry name" value="NADH-UBIQUINONE OXIDOREDUCTASE SUBUNIT ND4L"/>
    <property type="match status" value="1"/>
</dbReference>
<dbReference type="Pfam" id="PF00420">
    <property type="entry name" value="Oxidored_q2"/>
    <property type="match status" value="1"/>
</dbReference>
<accession>Q83BR5</accession>
<feature type="chain" id="PRO_0000390018" description="NADH-quinone oxidoreductase subunit K">
    <location>
        <begin position="1"/>
        <end position="101"/>
    </location>
</feature>
<feature type="transmembrane region" description="Helical" evidence="1">
    <location>
        <begin position="4"/>
        <end position="24"/>
    </location>
</feature>
<feature type="transmembrane region" description="Helical" evidence="1">
    <location>
        <begin position="30"/>
        <end position="50"/>
    </location>
</feature>
<feature type="transmembrane region" description="Helical" evidence="1">
    <location>
        <begin position="61"/>
        <end position="81"/>
    </location>
</feature>